<protein>
    <recommendedName>
        <fullName evidence="1">2-C-methyl-D-erythritol 4-phosphate cytidylyltransferase</fullName>
        <ecNumber evidence="1">2.7.7.60</ecNumber>
    </recommendedName>
    <alternativeName>
        <fullName evidence="1">4-diphosphocytidyl-2C-methyl-D-erythritol synthase</fullName>
    </alternativeName>
    <alternativeName>
        <fullName evidence="1">MEP cytidylyltransferase</fullName>
        <shortName evidence="1">MCT</shortName>
    </alternativeName>
</protein>
<feature type="chain" id="PRO_1000075935" description="2-C-methyl-D-erythritol 4-phosphate cytidylyltransferase">
    <location>
        <begin position="1"/>
        <end position="226"/>
    </location>
</feature>
<feature type="site" description="Transition state stabilizer" evidence="1">
    <location>
        <position position="13"/>
    </location>
</feature>
<feature type="site" description="Transition state stabilizer" evidence="1">
    <location>
        <position position="20"/>
    </location>
</feature>
<feature type="site" description="Positions MEP for the nucleophilic attack" evidence="1">
    <location>
        <position position="152"/>
    </location>
</feature>
<feature type="site" description="Positions MEP for the nucleophilic attack" evidence="1">
    <location>
        <position position="208"/>
    </location>
</feature>
<organism>
    <name type="scientific">Microcystis aeruginosa (strain NIES-843 / IAM M-2473)</name>
    <dbReference type="NCBI Taxonomy" id="449447"/>
    <lineage>
        <taxon>Bacteria</taxon>
        <taxon>Bacillati</taxon>
        <taxon>Cyanobacteriota</taxon>
        <taxon>Cyanophyceae</taxon>
        <taxon>Oscillatoriophycideae</taxon>
        <taxon>Chroococcales</taxon>
        <taxon>Microcystaceae</taxon>
        <taxon>Microcystis</taxon>
    </lineage>
</organism>
<evidence type="ECO:0000255" key="1">
    <source>
        <dbReference type="HAMAP-Rule" id="MF_00108"/>
    </source>
</evidence>
<dbReference type="EC" id="2.7.7.60" evidence="1"/>
<dbReference type="EMBL" id="AP009552">
    <property type="protein sequence ID" value="BAG04405.1"/>
    <property type="molecule type" value="Genomic_DNA"/>
</dbReference>
<dbReference type="RefSeq" id="WP_012267157.1">
    <property type="nucleotide sequence ID" value="NC_010296.1"/>
</dbReference>
<dbReference type="SMR" id="B0JUF7"/>
<dbReference type="STRING" id="449447.MAE_45830"/>
<dbReference type="PaxDb" id="449447-MAE_45830"/>
<dbReference type="EnsemblBacteria" id="BAG04405">
    <property type="protein sequence ID" value="BAG04405"/>
    <property type="gene ID" value="MAE_45830"/>
</dbReference>
<dbReference type="KEGG" id="mar:MAE_45830"/>
<dbReference type="PATRIC" id="fig|449447.4.peg.4161"/>
<dbReference type="eggNOG" id="COG1211">
    <property type="taxonomic scope" value="Bacteria"/>
</dbReference>
<dbReference type="HOGENOM" id="CLU_061281_1_0_3"/>
<dbReference type="BioCyc" id="MAER449447:MAE_RS19880-MONOMER"/>
<dbReference type="UniPathway" id="UPA00056">
    <property type="reaction ID" value="UER00093"/>
</dbReference>
<dbReference type="Proteomes" id="UP000001510">
    <property type="component" value="Chromosome"/>
</dbReference>
<dbReference type="GO" id="GO:0050518">
    <property type="term" value="F:2-C-methyl-D-erythritol 4-phosphate cytidylyltransferase activity"/>
    <property type="evidence" value="ECO:0007669"/>
    <property type="project" value="UniProtKB-UniRule"/>
</dbReference>
<dbReference type="GO" id="GO:0019288">
    <property type="term" value="P:isopentenyl diphosphate biosynthetic process, methylerythritol 4-phosphate pathway"/>
    <property type="evidence" value="ECO:0007669"/>
    <property type="project" value="UniProtKB-UniRule"/>
</dbReference>
<dbReference type="CDD" id="cd02516">
    <property type="entry name" value="CDP-ME_synthetase"/>
    <property type="match status" value="1"/>
</dbReference>
<dbReference type="FunFam" id="3.90.550.10:FF:000003">
    <property type="entry name" value="2-C-methyl-D-erythritol 4-phosphate cytidylyltransferase"/>
    <property type="match status" value="1"/>
</dbReference>
<dbReference type="Gene3D" id="3.90.550.10">
    <property type="entry name" value="Spore Coat Polysaccharide Biosynthesis Protein SpsA, Chain A"/>
    <property type="match status" value="1"/>
</dbReference>
<dbReference type="HAMAP" id="MF_00108">
    <property type="entry name" value="IspD"/>
    <property type="match status" value="1"/>
</dbReference>
<dbReference type="InterPro" id="IPR001228">
    <property type="entry name" value="IspD"/>
</dbReference>
<dbReference type="InterPro" id="IPR034683">
    <property type="entry name" value="IspD/TarI"/>
</dbReference>
<dbReference type="InterPro" id="IPR050088">
    <property type="entry name" value="IspD/TarI_cytidylyltransf_bact"/>
</dbReference>
<dbReference type="InterPro" id="IPR018294">
    <property type="entry name" value="ISPD_synthase_CS"/>
</dbReference>
<dbReference type="InterPro" id="IPR029044">
    <property type="entry name" value="Nucleotide-diphossugar_trans"/>
</dbReference>
<dbReference type="NCBIfam" id="TIGR00453">
    <property type="entry name" value="ispD"/>
    <property type="match status" value="1"/>
</dbReference>
<dbReference type="PANTHER" id="PTHR32125">
    <property type="entry name" value="2-C-METHYL-D-ERYTHRITOL 4-PHOSPHATE CYTIDYLYLTRANSFERASE, CHLOROPLASTIC"/>
    <property type="match status" value="1"/>
</dbReference>
<dbReference type="PANTHER" id="PTHR32125:SF4">
    <property type="entry name" value="2-C-METHYL-D-ERYTHRITOL 4-PHOSPHATE CYTIDYLYLTRANSFERASE, CHLOROPLASTIC"/>
    <property type="match status" value="1"/>
</dbReference>
<dbReference type="Pfam" id="PF01128">
    <property type="entry name" value="IspD"/>
    <property type="match status" value="1"/>
</dbReference>
<dbReference type="SUPFAM" id="SSF53448">
    <property type="entry name" value="Nucleotide-diphospho-sugar transferases"/>
    <property type="match status" value="1"/>
</dbReference>
<dbReference type="PROSITE" id="PS01295">
    <property type="entry name" value="ISPD"/>
    <property type="match status" value="1"/>
</dbReference>
<name>ISPD_MICAN</name>
<sequence>MYLLIPAAGMGKRMGSDRNKLLLTLHGKPLLAWTLLAAMESRAIIWIGIMAQPEDFEEIRAIITPINALKPVQIIQGGETRQKSVYNGLQALPEGAETVLIHDGARCLATPELFDRCAAALATCQGFIAAIPVKDTIKIVDSKGWIEDTPDRSRLWAAQTPQGFQVKLLKECHEQGRKLDWEVTDDAALLEKCGFPVKIVVGEETNLKITTPGDLAIAEYILSQRL</sequence>
<accession>B0JUF7</accession>
<gene>
    <name evidence="1" type="primary">ispD</name>
    <name type="ordered locus">MAE_45830</name>
</gene>
<comment type="function">
    <text evidence="1">Catalyzes the formation of 4-diphosphocytidyl-2-C-methyl-D-erythritol from CTP and 2-C-methyl-D-erythritol 4-phosphate (MEP).</text>
</comment>
<comment type="catalytic activity">
    <reaction evidence="1">
        <text>2-C-methyl-D-erythritol 4-phosphate + CTP + H(+) = 4-CDP-2-C-methyl-D-erythritol + diphosphate</text>
        <dbReference type="Rhea" id="RHEA:13429"/>
        <dbReference type="ChEBI" id="CHEBI:15378"/>
        <dbReference type="ChEBI" id="CHEBI:33019"/>
        <dbReference type="ChEBI" id="CHEBI:37563"/>
        <dbReference type="ChEBI" id="CHEBI:57823"/>
        <dbReference type="ChEBI" id="CHEBI:58262"/>
        <dbReference type="EC" id="2.7.7.60"/>
    </reaction>
</comment>
<comment type="pathway">
    <text evidence="1">Isoprenoid biosynthesis; isopentenyl diphosphate biosynthesis via DXP pathway; isopentenyl diphosphate from 1-deoxy-D-xylulose 5-phosphate: step 2/6.</text>
</comment>
<comment type="similarity">
    <text evidence="1">Belongs to the IspD/TarI cytidylyltransferase family. IspD subfamily.</text>
</comment>
<keyword id="KW-0414">Isoprene biosynthesis</keyword>
<keyword id="KW-0548">Nucleotidyltransferase</keyword>
<keyword id="KW-0808">Transferase</keyword>
<reference key="1">
    <citation type="journal article" date="2007" name="DNA Res.">
        <title>Complete genomic structure of the bloom-forming toxic cyanobacterium Microcystis aeruginosa NIES-843.</title>
        <authorList>
            <person name="Kaneko T."/>
            <person name="Nakajima N."/>
            <person name="Okamoto S."/>
            <person name="Suzuki I."/>
            <person name="Tanabe Y."/>
            <person name="Tamaoki M."/>
            <person name="Nakamura Y."/>
            <person name="Kasai F."/>
            <person name="Watanabe A."/>
            <person name="Kawashima K."/>
            <person name="Kishida Y."/>
            <person name="Ono A."/>
            <person name="Shimizu Y."/>
            <person name="Takahashi C."/>
            <person name="Minami C."/>
            <person name="Fujishiro T."/>
            <person name="Kohara M."/>
            <person name="Katoh M."/>
            <person name="Nakazaki N."/>
            <person name="Nakayama S."/>
            <person name="Yamada M."/>
            <person name="Tabata S."/>
            <person name="Watanabe M.M."/>
        </authorList>
    </citation>
    <scope>NUCLEOTIDE SEQUENCE [LARGE SCALE GENOMIC DNA]</scope>
    <source>
        <strain>NIES-843 / IAM M-247</strain>
    </source>
</reference>
<proteinExistence type="inferred from homology"/>